<sequence length="670" mass="76463">MKKIKIVPLILIVVVVGFGIYFYASKDKEINNTIDAIEDKNFKQVYKDSSYISKSDNGEVEMTERPIKIYNSLGVKDINIQDRKIKKVSKNKKRVDAQYKIKTNYGNIDRNVQFNFVKEDGMWKLDWDHSVIIPGMQKDQSIHIENLKSERGKILDRNNVELANTGTHMRLGIVPKNVSKKDYKAIAKELSISEDYINNKWIKIGYKMIPSFHFKTVKKMDEYLSDFAKKFHLTTNETESRNYPLGKATSHLLGYVGPINSEELKQKEYKGYKDDAVIGKKGLEKLYDKKLQHEDGYRVTIVRVDDNSNTIAHTLIEKKKKDGKDIQLTIDAKVQKSIYNNMKNDYGSGTAIHPQTGELLALVSTPSYDVYPFMYGMSNEEYNKLTEDKKEPLLNKFQITTSPGSTQKILTAMIGLNNKTLDDKTSYKIDGKGWQKDKSWGGYNVTRYEVVNGNIDLKQAIESSDNIFFARVALELGSKKFEKGMKKLGVGEDIPSDYPFYNAQISNKNLDNEILLADSGYGQGEILINPVQILSIYSALENNGNINAPHLLKDTKNKVWKKNIISKENINLLNDGMQQVVNKTHKEDIYRSYANLIGKSGTAELKMKQGETGRQIGWFISYDKDNPNMMMAINVKDVQDKGMASYNAKISGKVYDELYENGNKKYDIDE</sequence>
<keyword id="KW-0046">Antibiotic resistance</keyword>
<keyword id="KW-0131">Cell cycle</keyword>
<keyword id="KW-0132">Cell division</keyword>
<keyword id="KW-1003">Cell membrane</keyword>
<keyword id="KW-0133">Cell shape</keyword>
<keyword id="KW-0961">Cell wall biogenesis/degradation</keyword>
<keyword id="KW-0472">Membrane</keyword>
<keyword id="KW-0573">Peptidoglycan synthesis</keyword>
<keyword id="KW-0812">Transmembrane</keyword>
<keyword id="KW-1133">Transmembrane helix</keyword>
<comment type="subcellular location">
    <subcellularLocation>
        <location evidence="3">Cell membrane</location>
        <topology evidence="3">Single-pass membrane protein</topology>
    </subcellularLocation>
</comment>
<comment type="induction">
    <text>In the presence of beta-lactam antibiotics, MRSA cells produce this unique PBP in excessively large amounts and can still proliferate, while all the normal PBPs are inactivated (reversible switching ability of PBP formation).</text>
</comment>
<comment type="miscellaneous">
    <text>PBP has extremely low affinity to penicillin and most other beta-lactam antibiotics.</text>
</comment>
<comment type="similarity">
    <text evidence="3">Belongs to the transpeptidase family.</text>
</comment>
<name>PBP_STAAU</name>
<feature type="chain" id="PRO_0000195443" description="Beta-lactam-inducible penicillin-binding protein">
    <location>
        <begin position="1"/>
        <end position="670"/>
    </location>
</feature>
<feature type="transmembrane region" description="Helical" evidence="2">
    <location>
        <begin position="4"/>
        <end position="24"/>
    </location>
</feature>
<feature type="active site" description="Acyl-ester intermediate" evidence="1">
    <location>
        <position position="405"/>
    </location>
</feature>
<feature type="binding site" evidence="3">
    <location>
        <position position="25"/>
    </location>
    <ligand>
        <name>a penicillin</name>
        <dbReference type="ChEBI" id="CHEBI:51356"/>
    </ligand>
</feature>
<feature type="binding site" evidence="3">
    <location>
        <position position="405"/>
    </location>
    <ligand>
        <name>a penicillin</name>
        <dbReference type="ChEBI" id="CHEBI:51356"/>
    </ligand>
</feature>
<evidence type="ECO:0000250" key="1">
    <source>
        <dbReference type="UniProtKB" id="P0AD65"/>
    </source>
</evidence>
<evidence type="ECO:0000255" key="2"/>
<evidence type="ECO:0000305" key="3"/>
<protein>
    <recommendedName>
        <fullName>Beta-lactam-inducible penicillin-binding protein</fullName>
    </recommendedName>
</protein>
<proteinExistence type="evidence at transcript level"/>
<reference key="1">
    <citation type="journal article" date="1987" name="FEBS Lett.">
        <title>Evolution of an inducible penicillin-target protein in methicillin-resistant Staphylococcus aureus by gene fusion.</title>
        <authorList>
            <person name="Song M.D."/>
            <person name="Wachi M."/>
            <person name="Doi M."/>
            <person name="Ishino F."/>
            <person name="Matsuhashi M."/>
        </authorList>
    </citation>
    <scope>NUCLEOTIDE SEQUENCE [GENOMIC DNA]</scope>
</reference>
<accession>P07944</accession>
<dbReference type="EMBL" id="Y00688">
    <property type="protein sequence ID" value="CAA68684.1"/>
    <property type="molecule type" value="Genomic_DNA"/>
</dbReference>
<dbReference type="SMR" id="P07944"/>
<dbReference type="DrugBank" id="DB02443">
    <property type="generic name" value="Methicillin Acyl-Serine"/>
</dbReference>
<dbReference type="DrugBank" id="DB04041">
    <property type="generic name" value="Nitrocefin Acyl-Serine"/>
</dbReference>
<dbReference type="DrugBank" id="DB02968">
    <property type="generic name" value="Penicillin G Acyl-Serine"/>
</dbReference>
<dbReference type="DrugCentral" id="P07944"/>
<dbReference type="MEROPS" id="X52.001"/>
<dbReference type="GO" id="GO:0005886">
    <property type="term" value="C:plasma membrane"/>
    <property type="evidence" value="ECO:0007669"/>
    <property type="project" value="UniProtKB-SubCell"/>
</dbReference>
<dbReference type="GO" id="GO:0008658">
    <property type="term" value="F:penicillin binding"/>
    <property type="evidence" value="ECO:0007669"/>
    <property type="project" value="InterPro"/>
</dbReference>
<dbReference type="GO" id="GO:0071972">
    <property type="term" value="F:peptidoglycan L,D-transpeptidase activity"/>
    <property type="evidence" value="ECO:0007669"/>
    <property type="project" value="TreeGrafter"/>
</dbReference>
<dbReference type="GO" id="GO:0051301">
    <property type="term" value="P:cell division"/>
    <property type="evidence" value="ECO:0007669"/>
    <property type="project" value="UniProtKB-KW"/>
</dbReference>
<dbReference type="GO" id="GO:0071555">
    <property type="term" value="P:cell wall organization"/>
    <property type="evidence" value="ECO:0007669"/>
    <property type="project" value="UniProtKB-KW"/>
</dbReference>
<dbReference type="GO" id="GO:0009252">
    <property type="term" value="P:peptidoglycan biosynthetic process"/>
    <property type="evidence" value="ECO:0007669"/>
    <property type="project" value="UniProtKB-KW"/>
</dbReference>
<dbReference type="GO" id="GO:0008360">
    <property type="term" value="P:regulation of cell shape"/>
    <property type="evidence" value="ECO:0007669"/>
    <property type="project" value="UniProtKB-KW"/>
</dbReference>
<dbReference type="GO" id="GO:0046677">
    <property type="term" value="P:response to antibiotic"/>
    <property type="evidence" value="ECO:0007669"/>
    <property type="project" value="UniProtKB-KW"/>
</dbReference>
<dbReference type="Gene3D" id="3.40.710.10">
    <property type="entry name" value="DD-peptidase/beta-lactamase superfamily"/>
    <property type="match status" value="1"/>
</dbReference>
<dbReference type="Gene3D" id="3.10.450.100">
    <property type="entry name" value="NTF2-like, domain 1"/>
    <property type="match status" value="1"/>
</dbReference>
<dbReference type="Gene3D" id="3.90.1310.10">
    <property type="entry name" value="Penicillin-binding protein 2a (Domain 2)"/>
    <property type="match status" value="1"/>
</dbReference>
<dbReference type="Gene3D" id="3.30.1390.30">
    <property type="entry name" value="Penicillin-binding protein 2a, domain 3"/>
    <property type="match status" value="1"/>
</dbReference>
<dbReference type="InterPro" id="IPR050515">
    <property type="entry name" value="Bact_Transpept/Beta-Lactamase"/>
</dbReference>
<dbReference type="InterPro" id="IPR012338">
    <property type="entry name" value="Beta-lactam/transpept-like"/>
</dbReference>
<dbReference type="InterPro" id="IPR007887">
    <property type="entry name" value="MecA_N"/>
</dbReference>
<dbReference type="InterPro" id="IPR032710">
    <property type="entry name" value="NTF2-like_dom_sf"/>
</dbReference>
<dbReference type="InterPro" id="IPR005311">
    <property type="entry name" value="PBP_dimer"/>
</dbReference>
<dbReference type="InterPro" id="IPR036138">
    <property type="entry name" value="PBP_dimer_sf"/>
</dbReference>
<dbReference type="InterPro" id="IPR001460">
    <property type="entry name" value="PCN-bd_Tpept"/>
</dbReference>
<dbReference type="NCBIfam" id="NF000237">
    <property type="entry name" value="MECA_PBP2A"/>
    <property type="match status" value="1"/>
</dbReference>
<dbReference type="NCBIfam" id="NF000409">
    <property type="entry name" value="MECA_pure"/>
    <property type="match status" value="1"/>
</dbReference>
<dbReference type="PANTHER" id="PTHR30627:SF25">
    <property type="entry name" value="PENICILLIN-BINDING PROTEIN 3"/>
    <property type="match status" value="1"/>
</dbReference>
<dbReference type="PANTHER" id="PTHR30627">
    <property type="entry name" value="PEPTIDOGLYCAN D,D-TRANSPEPTIDASE"/>
    <property type="match status" value="1"/>
</dbReference>
<dbReference type="Pfam" id="PF05223">
    <property type="entry name" value="MecA_N"/>
    <property type="match status" value="1"/>
</dbReference>
<dbReference type="Pfam" id="PF03717">
    <property type="entry name" value="PBP_dimer"/>
    <property type="match status" value="1"/>
</dbReference>
<dbReference type="Pfam" id="PF00905">
    <property type="entry name" value="Transpeptidase"/>
    <property type="match status" value="1"/>
</dbReference>
<dbReference type="SUPFAM" id="SSF56601">
    <property type="entry name" value="beta-lactamase/transpeptidase-like"/>
    <property type="match status" value="1"/>
</dbReference>
<dbReference type="SUPFAM" id="SSF54427">
    <property type="entry name" value="NTF2-like"/>
    <property type="match status" value="1"/>
</dbReference>
<dbReference type="SUPFAM" id="SSF56519">
    <property type="entry name" value="Penicillin binding protein dimerisation domain"/>
    <property type="match status" value="1"/>
</dbReference>
<gene>
    <name type="primary">pbp</name>
</gene>
<organism>
    <name type="scientific">Staphylococcus aureus</name>
    <dbReference type="NCBI Taxonomy" id="1280"/>
    <lineage>
        <taxon>Bacteria</taxon>
        <taxon>Bacillati</taxon>
        <taxon>Bacillota</taxon>
        <taxon>Bacilli</taxon>
        <taxon>Bacillales</taxon>
        <taxon>Staphylococcaceae</taxon>
        <taxon>Staphylococcus</taxon>
    </lineage>
</organism>